<name>ACTP_ECO57</name>
<dbReference type="EMBL" id="AE005174">
    <property type="protein sequence ID" value="AAG59265.1"/>
    <property type="molecule type" value="Genomic_DNA"/>
</dbReference>
<dbReference type="EMBL" id="BA000007">
    <property type="protein sequence ID" value="BAB38472.1"/>
    <property type="molecule type" value="Genomic_DNA"/>
</dbReference>
<dbReference type="PIR" id="A98260">
    <property type="entry name" value="A98260"/>
</dbReference>
<dbReference type="PIR" id="E86100">
    <property type="entry name" value="E86100"/>
</dbReference>
<dbReference type="RefSeq" id="NP_313076.1">
    <property type="nucleotide sequence ID" value="NC_002695.1"/>
</dbReference>
<dbReference type="RefSeq" id="WP_000832551.1">
    <property type="nucleotide sequence ID" value="NZ_VOAI01000008.1"/>
</dbReference>
<dbReference type="SMR" id="Q8X5T7"/>
<dbReference type="STRING" id="155864.Z5666"/>
<dbReference type="GeneID" id="75059115"/>
<dbReference type="GeneID" id="914281"/>
<dbReference type="KEGG" id="ece:Z5666"/>
<dbReference type="KEGG" id="ecs:ECs_5049"/>
<dbReference type="PATRIC" id="fig|386585.9.peg.5275"/>
<dbReference type="eggNOG" id="COG4147">
    <property type="taxonomic scope" value="Bacteria"/>
</dbReference>
<dbReference type="HOGENOM" id="CLU_018808_8_3_6"/>
<dbReference type="OMA" id="GTTWVQM"/>
<dbReference type="Proteomes" id="UP000000558">
    <property type="component" value="Chromosome"/>
</dbReference>
<dbReference type="Proteomes" id="UP000002519">
    <property type="component" value="Chromosome"/>
</dbReference>
<dbReference type="GO" id="GO:0005886">
    <property type="term" value="C:plasma membrane"/>
    <property type="evidence" value="ECO:0007669"/>
    <property type="project" value="UniProtKB-SubCell"/>
</dbReference>
<dbReference type="GO" id="GO:0015123">
    <property type="term" value="F:acetate transmembrane transporter activity"/>
    <property type="evidence" value="ECO:0007669"/>
    <property type="project" value="UniProtKB-UniRule"/>
</dbReference>
<dbReference type="GO" id="GO:0043879">
    <property type="term" value="F:glycolate transmembrane transporter activity"/>
    <property type="evidence" value="ECO:0007669"/>
    <property type="project" value="InterPro"/>
</dbReference>
<dbReference type="GO" id="GO:0015293">
    <property type="term" value="F:symporter activity"/>
    <property type="evidence" value="ECO:0007669"/>
    <property type="project" value="UniProtKB-KW"/>
</dbReference>
<dbReference type="GO" id="GO:0006847">
    <property type="term" value="P:plasma membrane acetate transport"/>
    <property type="evidence" value="ECO:0007669"/>
    <property type="project" value="TreeGrafter"/>
</dbReference>
<dbReference type="GO" id="GO:0006814">
    <property type="term" value="P:sodium ion transport"/>
    <property type="evidence" value="ECO:0007669"/>
    <property type="project" value="UniProtKB-KW"/>
</dbReference>
<dbReference type="CDD" id="cd11480">
    <property type="entry name" value="SLC5sbd_u4"/>
    <property type="match status" value="1"/>
</dbReference>
<dbReference type="FunFam" id="1.20.1730.10:FF:000001">
    <property type="entry name" value="Cation/acetate symporter ActP"/>
    <property type="match status" value="1"/>
</dbReference>
<dbReference type="Gene3D" id="1.20.1730.10">
    <property type="entry name" value="Sodium/glucose cotransporter"/>
    <property type="match status" value="1"/>
</dbReference>
<dbReference type="HAMAP" id="MF_01426">
    <property type="entry name" value="Acet_symport_ActP"/>
    <property type="match status" value="1"/>
</dbReference>
<dbReference type="InterPro" id="IPR014083">
    <property type="entry name" value="Cation/Ac_symporter_ActP"/>
</dbReference>
<dbReference type="InterPro" id="IPR038377">
    <property type="entry name" value="Na/Glc_symporter_sf"/>
</dbReference>
<dbReference type="InterPro" id="IPR001734">
    <property type="entry name" value="Na/solute_symporter"/>
</dbReference>
<dbReference type="InterPro" id="IPR018212">
    <property type="entry name" value="Na/solute_symporter_CS"/>
</dbReference>
<dbReference type="InterPro" id="IPR050277">
    <property type="entry name" value="Sodium:Solute_Symporter"/>
</dbReference>
<dbReference type="NCBIfam" id="NF006903">
    <property type="entry name" value="PRK09395.1"/>
    <property type="match status" value="1"/>
</dbReference>
<dbReference type="NCBIfam" id="NF009135">
    <property type="entry name" value="PRK12488.1"/>
    <property type="match status" value="1"/>
</dbReference>
<dbReference type="NCBIfam" id="TIGR00813">
    <property type="entry name" value="sss"/>
    <property type="match status" value="1"/>
</dbReference>
<dbReference type="NCBIfam" id="TIGR02711">
    <property type="entry name" value="symport_actP"/>
    <property type="match status" value="1"/>
</dbReference>
<dbReference type="PANTHER" id="PTHR48086:SF6">
    <property type="entry name" value="CATION_ACETATE SYMPORTER ACTP"/>
    <property type="match status" value="1"/>
</dbReference>
<dbReference type="PANTHER" id="PTHR48086">
    <property type="entry name" value="SODIUM/PROLINE SYMPORTER-RELATED"/>
    <property type="match status" value="1"/>
</dbReference>
<dbReference type="Pfam" id="PF00474">
    <property type="entry name" value="SSF"/>
    <property type="match status" value="1"/>
</dbReference>
<dbReference type="PROSITE" id="PS00456">
    <property type="entry name" value="NA_SOLUT_SYMP_1"/>
    <property type="match status" value="1"/>
</dbReference>
<dbReference type="PROSITE" id="PS00457">
    <property type="entry name" value="NA_SOLUT_SYMP_2"/>
    <property type="match status" value="1"/>
</dbReference>
<dbReference type="PROSITE" id="PS50283">
    <property type="entry name" value="NA_SOLUT_SYMP_3"/>
    <property type="match status" value="1"/>
</dbReference>
<feature type="chain" id="PRO_0000105408" description="Cation/acetate symporter ActP">
    <location>
        <begin position="1"/>
        <end position="549"/>
    </location>
</feature>
<feature type="topological domain" description="Periplasmic" evidence="2">
    <location>
        <begin position="1"/>
        <end position="32"/>
    </location>
</feature>
<feature type="transmembrane region" description="Helical" evidence="2">
    <location>
        <begin position="33"/>
        <end position="55"/>
    </location>
</feature>
<feature type="topological domain" description="Cytoplasmic" evidence="2">
    <location>
        <begin position="56"/>
        <end position="75"/>
    </location>
</feature>
<feature type="transmembrane region" description="Helical" evidence="2">
    <location>
        <begin position="76"/>
        <end position="98"/>
    </location>
</feature>
<feature type="topological domain" description="Periplasmic" evidence="2">
    <location>
        <begin position="99"/>
        <end position="102"/>
    </location>
</feature>
<feature type="transmembrane region" description="Helical" evidence="2">
    <location>
        <begin position="103"/>
        <end position="125"/>
    </location>
</feature>
<feature type="topological domain" description="Cytoplasmic" evidence="2">
    <location>
        <begin position="126"/>
        <end position="145"/>
    </location>
</feature>
<feature type="transmembrane region" description="Helical" evidence="2">
    <location>
        <begin position="146"/>
        <end position="168"/>
    </location>
</feature>
<feature type="topological domain" description="Periplasmic" evidence="2">
    <location>
        <begin position="169"/>
        <end position="182"/>
    </location>
</feature>
<feature type="transmembrane region" description="Helical" evidence="2">
    <location>
        <begin position="183"/>
        <end position="205"/>
    </location>
</feature>
<feature type="topological domain" description="Cytoplasmic" evidence="2">
    <location>
        <begin position="206"/>
        <end position="211"/>
    </location>
</feature>
<feature type="transmembrane region" description="Helical" evidence="2">
    <location>
        <begin position="212"/>
        <end position="234"/>
    </location>
</feature>
<feature type="topological domain" description="Periplasmic" evidence="2">
    <location>
        <begin position="235"/>
        <end position="260"/>
    </location>
</feature>
<feature type="transmembrane region" description="Helical" evidence="2">
    <location>
        <begin position="261"/>
        <end position="283"/>
    </location>
</feature>
<feature type="topological domain" description="Cytoplasmic" evidence="2">
    <location>
        <begin position="284"/>
        <end position="302"/>
    </location>
</feature>
<feature type="transmembrane region" description="Helical" evidence="2">
    <location>
        <begin position="303"/>
        <end position="325"/>
    </location>
</feature>
<feature type="topological domain" description="Periplasmic" evidence="2">
    <location>
        <begin position="326"/>
        <end position="358"/>
    </location>
</feature>
<feature type="transmembrane region" description="Helical" evidence="2">
    <location>
        <begin position="359"/>
        <end position="381"/>
    </location>
</feature>
<feature type="topological domain" description="Cytoplasmic" evidence="2">
    <location>
        <begin position="382"/>
        <end position="401"/>
    </location>
</feature>
<feature type="transmembrane region" description="Helical" evidence="2">
    <location>
        <begin position="402"/>
        <end position="424"/>
    </location>
</feature>
<feature type="topological domain" description="Periplasmic" evidence="2">
    <location>
        <begin position="425"/>
        <end position="427"/>
    </location>
</feature>
<feature type="transmembrane region" description="Helical" evidence="2">
    <location>
        <begin position="428"/>
        <end position="450"/>
    </location>
</feature>
<feature type="topological domain" description="Cytoplasmic" evidence="2">
    <location>
        <begin position="451"/>
        <end position="461"/>
    </location>
</feature>
<feature type="transmembrane region" description="Helical" evidence="2">
    <location>
        <begin position="462"/>
        <end position="484"/>
    </location>
</feature>
<feature type="topological domain" description="Periplasmic" evidence="2">
    <location>
        <begin position="485"/>
        <end position="493"/>
    </location>
</feature>
<feature type="transmembrane region" description="Helical" evidence="2">
    <location>
        <begin position="494"/>
        <end position="516"/>
    </location>
</feature>
<feature type="topological domain" description="Cytoplasmic" evidence="2">
    <location>
        <begin position="517"/>
        <end position="549"/>
    </location>
</feature>
<sequence>MKRVLTALAATLPFAANAADAISGAVERQPTNWQAIIMFLIFVVFTLGITYWASKRVRSRNDYYTAGGNITGFQNGLAIAGDYMSAASFLGISALVFTSGYDGLIYSLGFLVGWPIILFLIAERLRNLGRYTFADVASYRLKQGPIRILSACGSLVVVALYLIAQMVGAGKLIELLFGLNYHIAVVLVGVLMMMYVLFGGMLATTWVQIIKAVLLLFGASFMAFMVMKHVGFSFNNLFSEAMAVHPKGVDIMKPGGLVKDPISALSLGLGLMFGTAGLPHILMRFFTVSDAREARKSVFYATGFMGYFYILTFIIGFGAIMLVGANPEYKDAAGHLIGGNNMAAVHLANAVGGNLFLGFISAVAFATILAVVAGLTLAGASAVSHDLYANVFKKGATEREELRVSKITVLILGVIAIILGVLFENQNIAFMVGLAFAIAASCNFPIILLSMYWSKLTTRGAMMGGWLGLITAVVLMILGPTIWVQILGHEKAIFPYEYPALFSITVAFLGIWFFSATDNSAEGARERELFRAQFIRSQTGFGVEQGRAH</sequence>
<comment type="function">
    <text evidence="1">Transports acetate.</text>
</comment>
<comment type="subcellular location">
    <subcellularLocation>
        <location evidence="1">Cell inner membrane</location>
        <topology evidence="1">Multi-pass membrane protein</topology>
    </subcellularLocation>
</comment>
<comment type="similarity">
    <text evidence="3">Belongs to the sodium:solute symporter (SSF) (TC 2.A.21) family.</text>
</comment>
<keyword id="KW-0997">Cell inner membrane</keyword>
<keyword id="KW-1003">Cell membrane</keyword>
<keyword id="KW-0406">Ion transport</keyword>
<keyword id="KW-0472">Membrane</keyword>
<keyword id="KW-1185">Reference proteome</keyword>
<keyword id="KW-0915">Sodium</keyword>
<keyword id="KW-0739">Sodium transport</keyword>
<keyword id="KW-0769">Symport</keyword>
<keyword id="KW-0812">Transmembrane</keyword>
<keyword id="KW-1133">Transmembrane helix</keyword>
<keyword id="KW-0813">Transport</keyword>
<evidence type="ECO:0000250" key="1"/>
<evidence type="ECO:0000255" key="2"/>
<evidence type="ECO:0000305" key="3"/>
<organism>
    <name type="scientific">Escherichia coli O157:H7</name>
    <dbReference type="NCBI Taxonomy" id="83334"/>
    <lineage>
        <taxon>Bacteria</taxon>
        <taxon>Pseudomonadati</taxon>
        <taxon>Pseudomonadota</taxon>
        <taxon>Gammaproteobacteria</taxon>
        <taxon>Enterobacterales</taxon>
        <taxon>Enterobacteriaceae</taxon>
        <taxon>Escherichia</taxon>
    </lineage>
</organism>
<proteinExistence type="inferred from homology"/>
<protein>
    <recommendedName>
        <fullName>Cation/acetate symporter ActP</fullName>
    </recommendedName>
    <alternativeName>
        <fullName>Acetate permease</fullName>
    </alternativeName>
    <alternativeName>
        <fullName>Acetate transporter ActP</fullName>
    </alternativeName>
</protein>
<accession>Q8X5T7</accession>
<accession>Q7A922</accession>
<reference key="1">
    <citation type="journal article" date="2001" name="Nature">
        <title>Genome sequence of enterohaemorrhagic Escherichia coli O157:H7.</title>
        <authorList>
            <person name="Perna N.T."/>
            <person name="Plunkett G. III"/>
            <person name="Burland V."/>
            <person name="Mau B."/>
            <person name="Glasner J.D."/>
            <person name="Rose D.J."/>
            <person name="Mayhew G.F."/>
            <person name="Evans P.S."/>
            <person name="Gregor J."/>
            <person name="Kirkpatrick H.A."/>
            <person name="Posfai G."/>
            <person name="Hackett J."/>
            <person name="Klink S."/>
            <person name="Boutin A."/>
            <person name="Shao Y."/>
            <person name="Miller L."/>
            <person name="Grotbeck E.J."/>
            <person name="Davis N.W."/>
            <person name="Lim A."/>
            <person name="Dimalanta E.T."/>
            <person name="Potamousis K."/>
            <person name="Apodaca J."/>
            <person name="Anantharaman T.S."/>
            <person name="Lin J."/>
            <person name="Yen G."/>
            <person name="Schwartz D.C."/>
            <person name="Welch R.A."/>
            <person name="Blattner F.R."/>
        </authorList>
    </citation>
    <scope>NUCLEOTIDE SEQUENCE [LARGE SCALE GENOMIC DNA]</scope>
    <source>
        <strain>O157:H7 / EDL933 / ATCC 700927 / EHEC</strain>
    </source>
</reference>
<reference key="2">
    <citation type="journal article" date="2001" name="DNA Res.">
        <title>Complete genome sequence of enterohemorrhagic Escherichia coli O157:H7 and genomic comparison with a laboratory strain K-12.</title>
        <authorList>
            <person name="Hayashi T."/>
            <person name="Makino K."/>
            <person name="Ohnishi M."/>
            <person name="Kurokawa K."/>
            <person name="Ishii K."/>
            <person name="Yokoyama K."/>
            <person name="Han C.-G."/>
            <person name="Ohtsubo E."/>
            <person name="Nakayama K."/>
            <person name="Murata T."/>
            <person name="Tanaka M."/>
            <person name="Tobe T."/>
            <person name="Iida T."/>
            <person name="Takami H."/>
            <person name="Honda T."/>
            <person name="Sasakawa C."/>
            <person name="Ogasawara N."/>
            <person name="Yasunaga T."/>
            <person name="Kuhara S."/>
            <person name="Shiba T."/>
            <person name="Hattori M."/>
            <person name="Shinagawa H."/>
        </authorList>
    </citation>
    <scope>NUCLEOTIDE SEQUENCE [LARGE SCALE GENOMIC DNA]</scope>
    <source>
        <strain>O157:H7 / Sakai / RIMD 0509952 / EHEC</strain>
    </source>
</reference>
<gene>
    <name type="primary">actP</name>
    <name type="ordered locus">Z5666</name>
    <name type="ordered locus">ECs5049</name>
</gene>